<feature type="chain" id="PRO_1000069367" description="ADP-L-glycero-D-manno-heptose-6-epimerase">
    <location>
        <begin position="1"/>
        <end position="317"/>
    </location>
</feature>
<feature type="active site" description="Proton acceptor" evidence="1">
    <location>
        <position position="139"/>
    </location>
</feature>
<feature type="active site" description="Proton acceptor" evidence="1">
    <location>
        <position position="175"/>
    </location>
</feature>
<feature type="binding site" evidence="1">
    <location>
        <begin position="10"/>
        <end position="11"/>
    </location>
    <ligand>
        <name>NADP(+)</name>
        <dbReference type="ChEBI" id="CHEBI:58349"/>
    </ligand>
</feature>
<feature type="binding site" evidence="1">
    <location>
        <begin position="31"/>
        <end position="32"/>
    </location>
    <ligand>
        <name>NADP(+)</name>
        <dbReference type="ChEBI" id="CHEBI:58349"/>
    </ligand>
</feature>
<feature type="binding site" evidence="1">
    <location>
        <position position="38"/>
    </location>
    <ligand>
        <name>NADP(+)</name>
        <dbReference type="ChEBI" id="CHEBI:58349"/>
    </ligand>
</feature>
<feature type="binding site" evidence="1">
    <location>
        <position position="53"/>
    </location>
    <ligand>
        <name>NADP(+)</name>
        <dbReference type="ChEBI" id="CHEBI:58349"/>
    </ligand>
</feature>
<feature type="binding site" evidence="1">
    <location>
        <begin position="75"/>
        <end position="79"/>
    </location>
    <ligand>
        <name>NADP(+)</name>
        <dbReference type="ChEBI" id="CHEBI:58349"/>
    </ligand>
</feature>
<feature type="binding site" evidence="1">
    <location>
        <position position="92"/>
    </location>
    <ligand>
        <name>NADP(+)</name>
        <dbReference type="ChEBI" id="CHEBI:58349"/>
    </ligand>
</feature>
<feature type="binding site" evidence="1">
    <location>
        <position position="143"/>
    </location>
    <ligand>
        <name>NADP(+)</name>
        <dbReference type="ChEBI" id="CHEBI:58349"/>
    </ligand>
</feature>
<feature type="binding site" evidence="1">
    <location>
        <position position="166"/>
    </location>
    <ligand>
        <name>substrate</name>
    </ligand>
</feature>
<feature type="binding site" evidence="1">
    <location>
        <position position="167"/>
    </location>
    <ligand>
        <name>NADP(+)</name>
        <dbReference type="ChEBI" id="CHEBI:58349"/>
    </ligand>
</feature>
<feature type="binding site" evidence="1">
    <location>
        <position position="175"/>
    </location>
    <ligand>
        <name>NADP(+)</name>
        <dbReference type="ChEBI" id="CHEBI:58349"/>
    </ligand>
</feature>
<feature type="binding site" evidence="1">
    <location>
        <position position="177"/>
    </location>
    <ligand>
        <name>substrate</name>
    </ligand>
</feature>
<feature type="binding site" evidence="1">
    <location>
        <position position="184"/>
    </location>
    <ligand>
        <name>substrate</name>
    </ligand>
</feature>
<feature type="binding site" evidence="1">
    <location>
        <begin position="198"/>
        <end position="201"/>
    </location>
    <ligand>
        <name>substrate</name>
    </ligand>
</feature>
<feature type="binding site" evidence="1">
    <location>
        <position position="211"/>
    </location>
    <ligand>
        <name>substrate</name>
    </ligand>
</feature>
<feature type="binding site" evidence="1">
    <location>
        <position position="275"/>
    </location>
    <ligand>
        <name>substrate</name>
    </ligand>
</feature>
<proteinExistence type="inferred from homology"/>
<keyword id="KW-0119">Carbohydrate metabolism</keyword>
<keyword id="KW-0413">Isomerase</keyword>
<keyword id="KW-0521">NADP</keyword>
<keyword id="KW-1185">Reference proteome</keyword>
<reference key="1">
    <citation type="submission" date="2006-08" db="EMBL/GenBank/DDBJ databases">
        <title>Complete sequence of Shewanella frigidimarina NCIMB 400.</title>
        <authorList>
            <consortium name="US DOE Joint Genome Institute"/>
            <person name="Copeland A."/>
            <person name="Lucas S."/>
            <person name="Lapidus A."/>
            <person name="Barry K."/>
            <person name="Detter J.C."/>
            <person name="Glavina del Rio T."/>
            <person name="Hammon N."/>
            <person name="Israni S."/>
            <person name="Dalin E."/>
            <person name="Tice H."/>
            <person name="Pitluck S."/>
            <person name="Fredrickson J.K."/>
            <person name="Kolker E."/>
            <person name="McCuel L.A."/>
            <person name="DiChristina T."/>
            <person name="Nealson K.H."/>
            <person name="Newman D."/>
            <person name="Tiedje J.M."/>
            <person name="Zhou J."/>
            <person name="Romine M.F."/>
            <person name="Culley D.E."/>
            <person name="Serres M."/>
            <person name="Chertkov O."/>
            <person name="Brettin T."/>
            <person name="Bruce D."/>
            <person name="Han C."/>
            <person name="Tapia R."/>
            <person name="Gilna P."/>
            <person name="Schmutz J."/>
            <person name="Larimer F."/>
            <person name="Land M."/>
            <person name="Hauser L."/>
            <person name="Kyrpides N."/>
            <person name="Mikhailova N."/>
            <person name="Richardson P."/>
        </authorList>
    </citation>
    <scope>NUCLEOTIDE SEQUENCE [LARGE SCALE GENOMIC DNA]</scope>
    <source>
        <strain>NCIMB 400</strain>
    </source>
</reference>
<dbReference type="EC" id="5.1.3.20" evidence="1"/>
<dbReference type="EMBL" id="CP000447">
    <property type="protein sequence ID" value="ABI73754.1"/>
    <property type="molecule type" value="Genomic_DNA"/>
</dbReference>
<dbReference type="RefSeq" id="WP_011639338.1">
    <property type="nucleotide sequence ID" value="NC_008345.1"/>
</dbReference>
<dbReference type="SMR" id="Q07W60"/>
<dbReference type="STRING" id="318167.Sfri_3929"/>
<dbReference type="KEGG" id="sfr:Sfri_3929"/>
<dbReference type="eggNOG" id="COG0451">
    <property type="taxonomic scope" value="Bacteria"/>
</dbReference>
<dbReference type="HOGENOM" id="CLU_007383_1_3_6"/>
<dbReference type="OrthoDB" id="9803010at2"/>
<dbReference type="UniPathway" id="UPA00356">
    <property type="reaction ID" value="UER00440"/>
</dbReference>
<dbReference type="Proteomes" id="UP000000684">
    <property type="component" value="Chromosome"/>
</dbReference>
<dbReference type="GO" id="GO:0008712">
    <property type="term" value="F:ADP-glyceromanno-heptose 6-epimerase activity"/>
    <property type="evidence" value="ECO:0007669"/>
    <property type="project" value="UniProtKB-UniRule"/>
</dbReference>
<dbReference type="GO" id="GO:0050661">
    <property type="term" value="F:NADP binding"/>
    <property type="evidence" value="ECO:0007669"/>
    <property type="project" value="InterPro"/>
</dbReference>
<dbReference type="GO" id="GO:0097171">
    <property type="term" value="P:ADP-L-glycero-beta-D-manno-heptose biosynthetic process"/>
    <property type="evidence" value="ECO:0007669"/>
    <property type="project" value="UniProtKB-UniPathway"/>
</dbReference>
<dbReference type="GO" id="GO:0005975">
    <property type="term" value="P:carbohydrate metabolic process"/>
    <property type="evidence" value="ECO:0007669"/>
    <property type="project" value="UniProtKB-UniRule"/>
</dbReference>
<dbReference type="CDD" id="cd05248">
    <property type="entry name" value="ADP_GME_SDR_e"/>
    <property type="match status" value="1"/>
</dbReference>
<dbReference type="Gene3D" id="3.40.50.720">
    <property type="entry name" value="NAD(P)-binding Rossmann-like Domain"/>
    <property type="match status" value="1"/>
</dbReference>
<dbReference type="Gene3D" id="3.90.25.10">
    <property type="entry name" value="UDP-galactose 4-epimerase, domain 1"/>
    <property type="match status" value="1"/>
</dbReference>
<dbReference type="HAMAP" id="MF_01601">
    <property type="entry name" value="Heptose_epimerase"/>
    <property type="match status" value="1"/>
</dbReference>
<dbReference type="InterPro" id="IPR001509">
    <property type="entry name" value="Epimerase_deHydtase"/>
</dbReference>
<dbReference type="InterPro" id="IPR011912">
    <property type="entry name" value="Heptose_epim"/>
</dbReference>
<dbReference type="InterPro" id="IPR036291">
    <property type="entry name" value="NAD(P)-bd_dom_sf"/>
</dbReference>
<dbReference type="NCBIfam" id="TIGR02197">
    <property type="entry name" value="heptose_epim"/>
    <property type="match status" value="1"/>
</dbReference>
<dbReference type="NCBIfam" id="NF008360">
    <property type="entry name" value="PRK11150.1"/>
    <property type="match status" value="1"/>
</dbReference>
<dbReference type="PANTHER" id="PTHR43103:SF3">
    <property type="entry name" value="ADP-L-GLYCERO-D-MANNO-HEPTOSE-6-EPIMERASE"/>
    <property type="match status" value="1"/>
</dbReference>
<dbReference type="PANTHER" id="PTHR43103">
    <property type="entry name" value="NUCLEOSIDE-DIPHOSPHATE-SUGAR EPIMERASE"/>
    <property type="match status" value="1"/>
</dbReference>
<dbReference type="Pfam" id="PF01370">
    <property type="entry name" value="Epimerase"/>
    <property type="match status" value="1"/>
</dbReference>
<dbReference type="SUPFAM" id="SSF51735">
    <property type="entry name" value="NAD(P)-binding Rossmann-fold domains"/>
    <property type="match status" value="1"/>
</dbReference>
<evidence type="ECO:0000255" key="1">
    <source>
        <dbReference type="HAMAP-Rule" id="MF_01601"/>
    </source>
</evidence>
<organism>
    <name type="scientific">Shewanella frigidimarina (strain NCIMB 400)</name>
    <dbReference type="NCBI Taxonomy" id="318167"/>
    <lineage>
        <taxon>Bacteria</taxon>
        <taxon>Pseudomonadati</taxon>
        <taxon>Pseudomonadota</taxon>
        <taxon>Gammaproteobacteria</taxon>
        <taxon>Alteromonadales</taxon>
        <taxon>Shewanellaceae</taxon>
        <taxon>Shewanella</taxon>
    </lineage>
</organism>
<accession>Q07W60</accession>
<sequence>MIVVTGAAGFIGSNLVKQLNAMGRNDIIAVDDLTDGTQMFNLADCEIADYLDKDDFIKQIKAGDFDNKLEVIFHQGACSSTTEWDGKFMMANNFEYSKTLLHYSQANNCQFIYASSASVYGGSEKFIEQRELEKPLNVYAYSKFLFDQYVRQQKLTGQVAGLRYFNVYGPREQHKGGMASVAFHFNNQINTNGVCRLFEGVDGYENGQQLRDFVFVEDVVKVNLWLWQNPSVSGIYNCGTGQAQSFNDVANAVIAYHGKGHIEYIPFPDKLKGAYQSYTQADLTQLRAAGYQGEFKTVEQAVPEYLDWLKTQHFIGQ</sequence>
<gene>
    <name evidence="1" type="primary">hldD</name>
    <name type="ordered locus">Sfri_3929</name>
</gene>
<comment type="function">
    <text evidence="1">Catalyzes the interconversion between ADP-D-glycero-beta-D-manno-heptose and ADP-L-glycero-beta-D-manno-heptose via an epimerization at carbon 6 of the heptose.</text>
</comment>
<comment type="catalytic activity">
    <reaction evidence="1">
        <text>ADP-D-glycero-beta-D-manno-heptose = ADP-L-glycero-beta-D-manno-heptose</text>
        <dbReference type="Rhea" id="RHEA:17577"/>
        <dbReference type="ChEBI" id="CHEBI:59967"/>
        <dbReference type="ChEBI" id="CHEBI:61506"/>
        <dbReference type="EC" id="5.1.3.20"/>
    </reaction>
</comment>
<comment type="cofactor">
    <cofactor evidence="1">
        <name>NADP(+)</name>
        <dbReference type="ChEBI" id="CHEBI:58349"/>
    </cofactor>
    <text evidence="1">Binds 1 NADP(+) per subunit.</text>
</comment>
<comment type="pathway">
    <text evidence="1">Nucleotide-sugar biosynthesis; ADP-L-glycero-beta-D-manno-heptose biosynthesis; ADP-L-glycero-beta-D-manno-heptose from D-glycero-beta-D-manno-heptose 7-phosphate: step 4/4.</text>
</comment>
<comment type="subunit">
    <text evidence="1">Homopentamer.</text>
</comment>
<comment type="domain">
    <text evidence="1">Contains a large N-terminal NADP-binding domain, and a smaller C-terminal substrate-binding domain.</text>
</comment>
<comment type="similarity">
    <text evidence="1">Belongs to the NAD(P)-dependent epimerase/dehydratase family. HldD subfamily.</text>
</comment>
<protein>
    <recommendedName>
        <fullName evidence="1">ADP-L-glycero-D-manno-heptose-6-epimerase</fullName>
        <ecNumber evidence="1">5.1.3.20</ecNumber>
    </recommendedName>
    <alternativeName>
        <fullName evidence="1">ADP-L-glycero-beta-D-manno-heptose-6-epimerase</fullName>
        <shortName evidence="1">ADP-glyceromanno-heptose 6-epimerase</shortName>
        <shortName evidence="1">ADP-hep 6-epimerase</shortName>
        <shortName evidence="1">AGME</shortName>
    </alternativeName>
</protein>
<name>HLDD_SHEFN</name>